<protein>
    <recommendedName>
        <fullName>Non-structural protein 1</fullName>
    </recommendedName>
    <alternativeName>
        <fullName>Non-structural protein 1C</fullName>
    </alternativeName>
</protein>
<name>NS1_ORSVW</name>
<organismHost>
    <name type="scientific">Ovis aries</name>
    <name type="common">Sheep</name>
    <dbReference type="NCBI Taxonomy" id="9940"/>
</organismHost>
<proteinExistence type="inferred from homology"/>
<comment type="function">
    <text evidence="1">Plays a major role in antagonizing the type I IFN-mediated antiviral response by degrading or inhibiting multiple cellular factors required for either IFN induction or response pathways. Acts cooperatively with NS2 to repress activation and nuclear translocation of host IFN-regulatory factor IRF3. Also disrupts the association of IRF3 with CREBBP. Interacts with host mitochondrial-associated membrane (MAM) MAVS and prevents the interaction with RIGI. Interacts with TRIM25 to suppress TRIM25-mediated RIGI ubiquitination and thereby RIGI-MAVS interaction. Together with NS2, participates in the proteasomal degradation of host STAT2, IRF3, IRF7, TBK1 and RIGI through a NS-degradasome involving CUL2 and Elongin-C. The degradasome requires an intact mitochondrial MAVS. Decreases the levels of host TRAF3 and IKBKE/IKK-epsilon. As functions other than disruptions of the type I IFN-mediated antiviral signaling pathways, induces host SOCS1 and SOCS3 expression. Suppresses premature apoptosis by an NF-kappa-B-dependent, interferon-independent mechanism and thus facilitates virus growth. Additionally, NS1 may serve some inhibitory role in viral transcription and RNA replication. Suppresses proliferation and activation of host CD103+ CD8+ cytotoxic T-lymphocytes and Th17 helper T-lymphocytes.</text>
</comment>
<comment type="subunit">
    <text evidence="1">Monomer. Homomultimer. Heteromultimer with NS2. Interacts with the matrix protein M. Interacts with host ELOC and CUL2; this interaction allows NS1 to form an active E3 ligase with ELOC and CUL2. Interacts with host IRF3; this interaction leads to the disrupted association of IRF3 with CREBBP and thus reduced binding of IRF3 to the IFN-beta promoter. Interacts with host MAVS; this interaction prevents MAVS binding to RIGI and inhibits signaling pathway leading to interferon production. Interacts with host TRIM25 (via SPRY domain); this interaction suppresses RIGI ubiquitination and results in decreased interaction between RIGI and MAVS.</text>
</comment>
<comment type="subcellular location">
    <subcellularLocation>
        <location evidence="1">Host cytoplasm</location>
    </subcellularLocation>
    <subcellularLocation>
        <location evidence="1">Host mitochondrion</location>
    </subcellularLocation>
    <subcellularLocation>
        <location evidence="1">Host nucleus</location>
    </subcellularLocation>
    <text evidence="1">Most NS1 resides in the mitochondria as a heteromer with NS2.</text>
</comment>
<comment type="similarity">
    <text evidence="2">Belongs to the pneumovirus non-structural protein 1 family.</text>
</comment>
<sequence length="136" mass="15208">MGSETLSVIQVRLQNIYDNDKVALLKITCNTNRLILLTHTLAKSVIHTIKLNGTVFLHIVTSSDFCPTSDIIESANFTTMPVLQNGGYIWELIELTHCFQTNGLIDDNCEVTFSKRLSDSELEKYSSQLSDLLGLN</sequence>
<reference key="1">
    <citation type="journal article" date="1994" name="J. Gen. Virol.">
        <title>Nucleotide and predicted amino acid sequence analysis of the ovine respiratory syncytial virus non-structural 1C and 1B genes and the small hydrophobic protein gene.</title>
        <authorList>
            <person name="Alansari H.M."/>
            <person name="Potgieter L.N.D."/>
        </authorList>
    </citation>
    <scope>NUCLEOTIDE SEQUENCE [GENOMIC RNA]</scope>
</reference>
<dbReference type="EMBL" id="L15452">
    <property type="protein sequence ID" value="AAA42803.1"/>
    <property type="molecule type" value="Genomic_RNA"/>
</dbReference>
<dbReference type="SMR" id="Q65703"/>
<dbReference type="GO" id="GO:0033650">
    <property type="term" value="C:host cell mitochondrion"/>
    <property type="evidence" value="ECO:0007669"/>
    <property type="project" value="UniProtKB-SubCell"/>
</dbReference>
<dbReference type="GO" id="GO:0042025">
    <property type="term" value="C:host cell nucleus"/>
    <property type="evidence" value="ECO:0007669"/>
    <property type="project" value="UniProtKB-SubCell"/>
</dbReference>
<dbReference type="GO" id="GO:0052150">
    <property type="term" value="P:symbiont-mediated perturbation of host apoptosis"/>
    <property type="evidence" value="ECO:0007669"/>
    <property type="project" value="UniProtKB-KW"/>
</dbReference>
<dbReference type="GO" id="GO:0039504">
    <property type="term" value="P:symbiont-mediated suppression of host adaptive immune response"/>
    <property type="evidence" value="ECO:0007669"/>
    <property type="project" value="UniProtKB-KW"/>
</dbReference>
<dbReference type="GO" id="GO:0039548">
    <property type="term" value="P:symbiont-mediated suppression of host cytoplasmic pattern recognition receptor signaling pathway via inhibition of IRF3 activity"/>
    <property type="evidence" value="ECO:0007669"/>
    <property type="project" value="UniProtKB-KW"/>
</dbReference>
<dbReference type="GO" id="GO:0039557">
    <property type="term" value="P:symbiont-mediated suppression of host cytoplasmic pattern recognition receptor signaling pathway via inhibition of IRF7 activity"/>
    <property type="evidence" value="ECO:0007669"/>
    <property type="project" value="UniProtKB-KW"/>
</dbReference>
<dbReference type="GO" id="GO:0039545">
    <property type="term" value="P:symbiont-mediated suppression of host cytoplasmic pattern recognition receptor signaling pathway via inhibition of MAVS activity"/>
    <property type="evidence" value="ECO:0007669"/>
    <property type="project" value="UniProtKB-KW"/>
</dbReference>
<dbReference type="GO" id="GO:0039540">
    <property type="term" value="P:symbiont-mediated suppression of host cytoplasmic pattern recognition receptor signaling pathway via inhibition of RIG-I activity"/>
    <property type="evidence" value="ECO:0007669"/>
    <property type="project" value="UniProtKB-KW"/>
</dbReference>
<dbReference type="GO" id="GO:0039723">
    <property type="term" value="P:symbiont-mediated suppression of host cytoplasmic pattern recognition receptor signaling pathway via inhibition of TBK1 activity"/>
    <property type="evidence" value="ECO:0007669"/>
    <property type="project" value="UniProtKB-KW"/>
</dbReference>
<dbReference type="GO" id="GO:0039564">
    <property type="term" value="P:symbiont-mediated suppression of host JAK-STAT cascade via inhibition of STAT2 activity"/>
    <property type="evidence" value="ECO:0007669"/>
    <property type="project" value="UniProtKB-KW"/>
</dbReference>
<dbReference type="GO" id="GO:0039722">
    <property type="term" value="P:symbiont-mediated suppression of host toll-like receptor signaling pathway"/>
    <property type="evidence" value="ECO:0007669"/>
    <property type="project" value="UniProtKB-KW"/>
</dbReference>
<dbReference type="GO" id="GO:0039502">
    <property type="term" value="P:symbiont-mediated suppression of host type I interferon-mediated signaling pathway"/>
    <property type="evidence" value="ECO:0007669"/>
    <property type="project" value="UniProtKB-KW"/>
</dbReference>
<dbReference type="InterPro" id="IPR005099">
    <property type="entry name" value="Pneumo_NS1"/>
</dbReference>
<dbReference type="Pfam" id="PF03438">
    <property type="entry name" value="Pneumo_NS1"/>
    <property type="match status" value="1"/>
</dbReference>
<evidence type="ECO:0000250" key="1">
    <source>
        <dbReference type="UniProtKB" id="P0DOE9"/>
    </source>
</evidence>
<evidence type="ECO:0000305" key="2"/>
<organism>
    <name type="scientific">Ovine respiratory syncytial virus (strain WSU 83-1578)</name>
    <name type="common">ORSV</name>
    <dbReference type="NCBI Taxonomy" id="79699"/>
    <lineage>
        <taxon>Viruses</taxon>
        <taxon>Riboviria</taxon>
        <taxon>Orthornavirae</taxon>
        <taxon>Negarnaviricota</taxon>
        <taxon>Haploviricotina</taxon>
        <taxon>Monjiviricetes</taxon>
        <taxon>Mononegavirales</taxon>
        <taxon>Pneumoviridae</taxon>
        <taxon>Ovine respiratory syncytial virus</taxon>
    </lineage>
</organism>
<keyword id="KW-1035">Host cytoplasm</keyword>
<keyword id="KW-1045">Host mitochondrion</keyword>
<keyword id="KW-1048">Host nucleus</keyword>
<keyword id="KW-0945">Host-virus interaction</keyword>
<keyword id="KW-1080">Inhibition of host adaptive immune response by virus</keyword>
<keyword id="KW-1090">Inhibition of host innate immune response by virus</keyword>
<keyword id="KW-1114">Inhibition of host interferon signaling pathway by virus</keyword>
<keyword id="KW-1092">Inhibition of host IRF3 by virus</keyword>
<keyword id="KW-1093">Inhibition of host IRF7 by virus</keyword>
<keyword id="KW-1097">Inhibition of host MAVS by virus</keyword>
<keyword id="KW-1088">Inhibition of host RIG-I by virus</keyword>
<keyword id="KW-1113">Inhibition of host RLR pathway by virus</keyword>
<keyword id="KW-1106">Inhibition of host STAT2 by virus</keyword>
<keyword id="KW-1223">Inhibition of host TBK1 by virus</keyword>
<keyword id="KW-1225">Inhibition of host TLR pathway by virus</keyword>
<keyword id="KW-0922">Interferon antiviral system evasion</keyword>
<keyword id="KW-1119">Modulation of host cell apoptosis by virus</keyword>
<keyword id="KW-0899">Viral immunoevasion</keyword>
<gene>
    <name type="primary">1C</name>
</gene>
<accession>Q65703</accession>
<feature type="chain" id="PRO_0000142781" description="Non-structural protein 1">
    <location>
        <begin position="1"/>
        <end position="136"/>
    </location>
</feature>